<dbReference type="EMBL" id="AB000910">
    <property type="protein sequence ID" value="BAA19210.1"/>
    <property type="molecule type" value="mRNA"/>
</dbReference>
<dbReference type="RefSeq" id="NP_999082.1">
    <property type="nucleotide sequence ID" value="NM_213917.1"/>
</dbReference>
<dbReference type="RefSeq" id="XP_003359770.1">
    <property type="nucleotide sequence ID" value="XM_003359722.3"/>
</dbReference>
<dbReference type="RefSeq" id="XP_005659995.1">
    <property type="nucleotide sequence ID" value="XM_005659938.2"/>
</dbReference>
<dbReference type="PDB" id="3J7O">
    <property type="method" value="EM"/>
    <property type="resolution" value="3.40 A"/>
    <property type="chains" value="o=1-106"/>
</dbReference>
<dbReference type="PDB" id="3J7P">
    <property type="method" value="EM"/>
    <property type="resolution" value="3.50 A"/>
    <property type="chains" value="o=1-106"/>
</dbReference>
<dbReference type="PDB" id="3J7Q">
    <property type="method" value="EM"/>
    <property type="resolution" value="3.40 A"/>
    <property type="chains" value="o=1-106"/>
</dbReference>
<dbReference type="PDB" id="3J7R">
    <property type="method" value="EM"/>
    <property type="resolution" value="3.90 A"/>
    <property type="chains" value="o=1-106"/>
</dbReference>
<dbReference type="PDBsum" id="3J7O"/>
<dbReference type="PDBsum" id="3J7P"/>
<dbReference type="PDBsum" id="3J7Q"/>
<dbReference type="PDBsum" id="3J7R"/>
<dbReference type="SMR" id="P83884"/>
<dbReference type="FunCoup" id="P83884">
    <property type="interactions" value="1639"/>
</dbReference>
<dbReference type="STRING" id="9823.ENSSSCP00000005385"/>
<dbReference type="PaxDb" id="9823-ENSSSCP00000005384"/>
<dbReference type="PeptideAtlas" id="P83884"/>
<dbReference type="Ensembl" id="ENSSSCT00000018460.2">
    <property type="protein sequence ID" value="ENSSSCP00000017960.1"/>
    <property type="gene ID" value="ENSSSCG00000035738.1"/>
</dbReference>
<dbReference type="Ensembl" id="ENSSSCT00015064383.1">
    <property type="protein sequence ID" value="ENSSSCP00015025769.1"/>
    <property type="gene ID" value="ENSSSCG00015048362.1"/>
</dbReference>
<dbReference type="Ensembl" id="ENSSSCT00025072552.1">
    <property type="protein sequence ID" value="ENSSSCP00025031430.1"/>
    <property type="gene ID" value="ENSSSCG00025053053.1"/>
</dbReference>
<dbReference type="Ensembl" id="ENSSSCT00030102488.1">
    <property type="protein sequence ID" value="ENSSSCP00030047283.1"/>
    <property type="gene ID" value="ENSSSCG00030073192.1"/>
</dbReference>
<dbReference type="Ensembl" id="ENSSSCT00035108502.1">
    <property type="protein sequence ID" value="ENSSSCP00035047020.1"/>
    <property type="gene ID" value="ENSSSCG00035079376.1"/>
</dbReference>
<dbReference type="Ensembl" id="ENSSSCT00040065527.1">
    <property type="protein sequence ID" value="ENSSSCP00040027750.1"/>
    <property type="gene ID" value="ENSSSCG00040048627.1"/>
</dbReference>
<dbReference type="Ensembl" id="ENSSSCT00045060430.1">
    <property type="protein sequence ID" value="ENSSSCP00045042437.1"/>
    <property type="gene ID" value="ENSSSCG00045035196.1"/>
</dbReference>
<dbReference type="Ensembl" id="ENSSSCT00055040305.1">
    <property type="protein sequence ID" value="ENSSSCP00055032066.1"/>
    <property type="gene ID" value="ENSSSCG00055020563.1"/>
</dbReference>
<dbReference type="Ensembl" id="ENSSSCT00060076400.1">
    <property type="protein sequence ID" value="ENSSSCP00060033015.1"/>
    <property type="gene ID" value="ENSSSCG00060056090.1"/>
</dbReference>
<dbReference type="Ensembl" id="ENSSSCT00065039652.1">
    <property type="protein sequence ID" value="ENSSSCP00065016784.1"/>
    <property type="gene ID" value="ENSSSCG00065029384.1"/>
</dbReference>
<dbReference type="Ensembl" id="ENSSSCT00070036976.1">
    <property type="protein sequence ID" value="ENSSSCP00070030920.1"/>
    <property type="gene ID" value="ENSSSCG00070018758.1"/>
</dbReference>
<dbReference type="Ensembl" id="ENSSSCT00085047053">
    <property type="protein sequence ID" value="ENSSSCP00085032852"/>
    <property type="gene ID" value="ENSSSCG00085024530"/>
</dbReference>
<dbReference type="Ensembl" id="ENSSSCT00105028439">
    <property type="protein sequence ID" value="ENSSSCP00105020029"/>
    <property type="gene ID" value="ENSSSCG00105014681"/>
</dbReference>
<dbReference type="Ensembl" id="ENSSSCT00110025231">
    <property type="protein sequence ID" value="ENSSSCP00110016957"/>
    <property type="gene ID" value="ENSSSCG00110013206"/>
</dbReference>
<dbReference type="Ensembl" id="ENSSSCT00115016884">
    <property type="protein sequence ID" value="ENSSSCP00115015940"/>
    <property type="gene ID" value="ENSSSCG00115009821"/>
</dbReference>
<dbReference type="Ensembl" id="ENSSSCT00115017331">
    <property type="protein sequence ID" value="ENSSSCP00115016363"/>
    <property type="gene ID" value="ENSSSCG00115010075"/>
</dbReference>
<dbReference type="Ensembl" id="ENSSSCT00130024109">
    <property type="protein sequence ID" value="ENSSSCP00130016653"/>
    <property type="gene ID" value="ENSSSCG00130012340"/>
</dbReference>
<dbReference type="GeneID" id="396952"/>
<dbReference type="KEGG" id="ssc:396952"/>
<dbReference type="CTD" id="6166"/>
<dbReference type="eggNOG" id="KOG3464">
    <property type="taxonomic scope" value="Eukaryota"/>
</dbReference>
<dbReference type="GeneTree" id="ENSGT00390000018085"/>
<dbReference type="HOGENOM" id="CLU_114645_2_1_1"/>
<dbReference type="InParanoid" id="P83884"/>
<dbReference type="OMA" id="HNVTQYK"/>
<dbReference type="OrthoDB" id="9758461at2759"/>
<dbReference type="TreeFam" id="TF300213"/>
<dbReference type="Proteomes" id="UP000008227">
    <property type="component" value="Chromosome 16"/>
</dbReference>
<dbReference type="Proteomes" id="UP000314985">
    <property type="component" value="Chromosome 16"/>
</dbReference>
<dbReference type="Proteomes" id="UP000694570">
    <property type="component" value="Unplaced"/>
</dbReference>
<dbReference type="Proteomes" id="UP000694571">
    <property type="component" value="Unplaced"/>
</dbReference>
<dbReference type="Proteomes" id="UP000694720">
    <property type="component" value="Unplaced"/>
</dbReference>
<dbReference type="Proteomes" id="UP000694722">
    <property type="component" value="Unplaced"/>
</dbReference>
<dbReference type="Proteomes" id="UP000694723">
    <property type="component" value="Unplaced"/>
</dbReference>
<dbReference type="Proteomes" id="UP000694724">
    <property type="component" value="Unplaced"/>
</dbReference>
<dbReference type="Proteomes" id="UP000694725">
    <property type="component" value="Unplaced"/>
</dbReference>
<dbReference type="Proteomes" id="UP000694726">
    <property type="component" value="Unplaced"/>
</dbReference>
<dbReference type="Proteomes" id="UP000694727">
    <property type="component" value="Unplaced"/>
</dbReference>
<dbReference type="Proteomes" id="UP000694728">
    <property type="component" value="Unplaced"/>
</dbReference>
<dbReference type="Bgee" id="ENSSSCG00000035738">
    <property type="expression patterns" value="Expressed in granulosa cell and 37 other cell types or tissues"/>
</dbReference>
<dbReference type="GO" id="GO:0098556">
    <property type="term" value="C:cytoplasmic side of rough endoplasmic reticulum membrane"/>
    <property type="evidence" value="ECO:0000314"/>
    <property type="project" value="UniProtKB"/>
</dbReference>
<dbReference type="GO" id="GO:0022625">
    <property type="term" value="C:cytosolic large ribosomal subunit"/>
    <property type="evidence" value="ECO:0000318"/>
    <property type="project" value="GO_Central"/>
</dbReference>
<dbReference type="GO" id="GO:0015934">
    <property type="term" value="C:large ribosomal subunit"/>
    <property type="evidence" value="ECO:0000314"/>
    <property type="project" value="UniProtKB"/>
</dbReference>
<dbReference type="GO" id="GO:0003735">
    <property type="term" value="F:structural constituent of ribosome"/>
    <property type="evidence" value="ECO:0007669"/>
    <property type="project" value="InterPro"/>
</dbReference>
<dbReference type="GO" id="GO:0006412">
    <property type="term" value="P:translation"/>
    <property type="evidence" value="ECO:0007669"/>
    <property type="project" value="InterPro"/>
</dbReference>
<dbReference type="FunFam" id="3.10.450.80:FF:000001">
    <property type="entry name" value="60S ribosomal protein L44"/>
    <property type="match status" value="1"/>
</dbReference>
<dbReference type="Gene3D" id="3.10.450.80">
    <property type="match status" value="1"/>
</dbReference>
<dbReference type="InterPro" id="IPR000552">
    <property type="entry name" value="Ribosomal_eL44"/>
</dbReference>
<dbReference type="InterPro" id="IPR053708">
    <property type="entry name" value="Ribosomal_LSU_eL42"/>
</dbReference>
<dbReference type="InterPro" id="IPR011332">
    <property type="entry name" value="Ribosomal_zn-bd"/>
</dbReference>
<dbReference type="PANTHER" id="PTHR10369">
    <property type="entry name" value="60S RIBOSOMAL PROTEIN L36A/L44"/>
    <property type="match status" value="1"/>
</dbReference>
<dbReference type="Pfam" id="PF00935">
    <property type="entry name" value="Ribosomal_L44"/>
    <property type="match status" value="1"/>
</dbReference>
<dbReference type="SUPFAM" id="SSF57829">
    <property type="entry name" value="Zn-binding ribosomal proteins"/>
    <property type="match status" value="1"/>
</dbReference>
<dbReference type="PROSITE" id="PS01172">
    <property type="entry name" value="RIBOSOMAL_L44E"/>
    <property type="match status" value="1"/>
</dbReference>
<proteinExistence type="evidence at protein level"/>
<comment type="function">
    <text evidence="1">Component of the large ribosomal subunit. The ribosome is a large ribonucleoprotein complex responsible for the synthesis of proteins in the cell.</text>
</comment>
<comment type="subunit">
    <text evidence="1">Component of the large ribosomal subunit.</text>
</comment>
<comment type="subcellular location">
    <subcellularLocation>
        <location evidence="1">Cytoplasm</location>
    </subcellularLocation>
</comment>
<comment type="similarity">
    <text evidence="3">Belongs to the eukaryotic ribosomal protein eL42 family.</text>
</comment>
<gene>
    <name type="primary">RPL36A</name>
    <name type="synonym">RPL44</name>
</gene>
<name>RL36A_PIG</name>
<reference key="1">
    <citation type="submission" date="1997-02" db="EMBL/GenBank/DDBJ databases">
        <title>Cloning of the pig homolog of yeast ribosomal protein L44.</title>
        <authorList>
            <person name="Kimura M."/>
            <person name="Kawakami K."/>
            <person name="Suzuki H."/>
            <person name="Hamasima N."/>
        </authorList>
    </citation>
    <scope>NUCLEOTIDE SEQUENCE [MRNA]</scope>
</reference>
<protein>
    <recommendedName>
        <fullName evidence="3">Large ribosomal subunit protein eL42</fullName>
    </recommendedName>
    <alternativeName>
        <fullName>60S ribosomal protein L36a</fullName>
    </alternativeName>
    <alternativeName>
        <fullName>60S ribosomal protein L44</fullName>
    </alternativeName>
</protein>
<accession>P83884</accession>
<accession>P09896</accession>
<accession>P10661</accession>
<evidence type="ECO:0000250" key="1">
    <source>
        <dbReference type="UniProtKB" id="P83881"/>
    </source>
</evidence>
<evidence type="ECO:0000256" key="2">
    <source>
        <dbReference type="SAM" id="MobiDB-lite"/>
    </source>
</evidence>
<evidence type="ECO:0000305" key="3"/>
<organism>
    <name type="scientific">Sus scrofa</name>
    <name type="common">Pig</name>
    <dbReference type="NCBI Taxonomy" id="9823"/>
    <lineage>
        <taxon>Eukaryota</taxon>
        <taxon>Metazoa</taxon>
        <taxon>Chordata</taxon>
        <taxon>Craniata</taxon>
        <taxon>Vertebrata</taxon>
        <taxon>Euteleostomi</taxon>
        <taxon>Mammalia</taxon>
        <taxon>Eutheria</taxon>
        <taxon>Laurasiatheria</taxon>
        <taxon>Artiodactyla</taxon>
        <taxon>Suina</taxon>
        <taxon>Suidae</taxon>
        <taxon>Sus</taxon>
    </lineage>
</organism>
<feature type="chain" id="PRO_0000149121" description="Large ribosomal subunit protein eL42">
    <location>
        <begin position="1"/>
        <end position="106"/>
    </location>
</feature>
<feature type="region of interest" description="Disordered" evidence="2">
    <location>
        <begin position="34"/>
        <end position="53"/>
    </location>
</feature>
<sequence>MVNVPKTRRTFCKKCGKHQPHKVTQYKKGKDSLYAQGKRRYDRKQSGYGGQTKPIFRKKAKTTKKIVLRLECVEPNCRSKRMLAIKRCKHFELGGDKKRKGQVIQF</sequence>
<keyword id="KW-0002">3D-structure</keyword>
<keyword id="KW-0963">Cytoplasm</keyword>
<keyword id="KW-1185">Reference proteome</keyword>
<keyword id="KW-0687">Ribonucleoprotein</keyword>
<keyword id="KW-0689">Ribosomal protein</keyword>